<keyword id="KW-0029">Amino-acid transport</keyword>
<keyword id="KW-1003">Cell membrane</keyword>
<keyword id="KW-0449">Lipoprotein</keyword>
<keyword id="KW-0472">Membrane</keyword>
<keyword id="KW-0564">Palmitate</keyword>
<keyword id="KW-1185">Reference proteome</keyword>
<keyword id="KW-0732">Signal</keyword>
<keyword id="KW-0813">Transport</keyword>
<name>METQ_SALTY</name>
<dbReference type="EMBL" id="AE006468">
    <property type="protein sequence ID" value="AAL19208.1"/>
    <property type="molecule type" value="Genomic_DNA"/>
</dbReference>
<dbReference type="RefSeq" id="WP_000874215.1">
    <property type="nucleotide sequence ID" value="NC_003197.2"/>
</dbReference>
<dbReference type="SMR" id="Q8ZRN1"/>
<dbReference type="STRING" id="99287.STM0245"/>
<dbReference type="PaxDb" id="99287-STM0245"/>
<dbReference type="KEGG" id="stm:STM0245"/>
<dbReference type="PATRIC" id="fig|99287.12.peg.259"/>
<dbReference type="HOGENOM" id="CLU_067080_0_0_6"/>
<dbReference type="OMA" id="DHKITRE"/>
<dbReference type="PhylomeDB" id="Q8ZRN1"/>
<dbReference type="BioCyc" id="SENT99287:STM0245-MONOMER"/>
<dbReference type="PHI-base" id="PHI:8095"/>
<dbReference type="Proteomes" id="UP000001014">
    <property type="component" value="Chromosome"/>
</dbReference>
<dbReference type="GO" id="GO:0005886">
    <property type="term" value="C:plasma membrane"/>
    <property type="evidence" value="ECO:0000318"/>
    <property type="project" value="GO_Central"/>
</dbReference>
<dbReference type="GO" id="GO:0048473">
    <property type="term" value="P:D-methionine transmembrane transport"/>
    <property type="evidence" value="ECO:0000318"/>
    <property type="project" value="GO_Central"/>
</dbReference>
<dbReference type="GO" id="GO:1903692">
    <property type="term" value="P:methionine import across plasma membrane"/>
    <property type="evidence" value="ECO:0000318"/>
    <property type="project" value="GO_Central"/>
</dbReference>
<dbReference type="CDD" id="cd13598">
    <property type="entry name" value="PBP2_lipoprotein_IlpA_like"/>
    <property type="match status" value="1"/>
</dbReference>
<dbReference type="FunFam" id="3.40.190.10:FF:000016">
    <property type="entry name" value="Lipoprotein"/>
    <property type="match status" value="1"/>
</dbReference>
<dbReference type="Gene3D" id="3.40.190.10">
    <property type="entry name" value="Periplasmic binding protein-like II"/>
    <property type="match status" value="2"/>
</dbReference>
<dbReference type="InterPro" id="IPR004872">
    <property type="entry name" value="Lipoprotein_NlpA"/>
</dbReference>
<dbReference type="NCBIfam" id="TIGR00363">
    <property type="entry name" value="MetQ/NlpA family lipoprotein"/>
    <property type="match status" value="1"/>
</dbReference>
<dbReference type="NCBIfam" id="NF008285">
    <property type="entry name" value="PRK11063.1"/>
    <property type="match status" value="1"/>
</dbReference>
<dbReference type="PANTHER" id="PTHR30429">
    <property type="entry name" value="D-METHIONINE-BINDING LIPOPROTEIN METQ"/>
    <property type="match status" value="1"/>
</dbReference>
<dbReference type="PANTHER" id="PTHR30429:SF1">
    <property type="entry name" value="D-METHIONINE-BINDING LIPOPROTEIN METQ-RELATED"/>
    <property type="match status" value="1"/>
</dbReference>
<dbReference type="Pfam" id="PF03180">
    <property type="entry name" value="Lipoprotein_9"/>
    <property type="match status" value="1"/>
</dbReference>
<dbReference type="PIRSF" id="PIRSF002854">
    <property type="entry name" value="MetQ"/>
    <property type="match status" value="1"/>
</dbReference>
<dbReference type="SUPFAM" id="SSF53850">
    <property type="entry name" value="Periplasmic binding protein-like II"/>
    <property type="match status" value="1"/>
</dbReference>
<dbReference type="PROSITE" id="PS51257">
    <property type="entry name" value="PROKAR_LIPOPROTEIN"/>
    <property type="match status" value="1"/>
</dbReference>
<reference key="1">
    <citation type="journal article" date="2001" name="Nature">
        <title>Complete genome sequence of Salmonella enterica serovar Typhimurium LT2.</title>
        <authorList>
            <person name="McClelland M."/>
            <person name="Sanderson K.E."/>
            <person name="Spieth J."/>
            <person name="Clifton S.W."/>
            <person name="Latreille P."/>
            <person name="Courtney L."/>
            <person name="Porwollik S."/>
            <person name="Ali J."/>
            <person name="Dante M."/>
            <person name="Du F."/>
            <person name="Hou S."/>
            <person name="Layman D."/>
            <person name="Leonard S."/>
            <person name="Nguyen C."/>
            <person name="Scott K."/>
            <person name="Holmes A."/>
            <person name="Grewal N."/>
            <person name="Mulvaney E."/>
            <person name="Ryan E."/>
            <person name="Sun H."/>
            <person name="Florea L."/>
            <person name="Miller W."/>
            <person name="Stoneking T."/>
            <person name="Nhan M."/>
            <person name="Waterston R."/>
            <person name="Wilson R.K."/>
        </authorList>
    </citation>
    <scope>NUCLEOTIDE SEQUENCE [LARGE SCALE GENOMIC DNA]</scope>
    <source>
        <strain>LT2 / SGSC1412 / ATCC 700720</strain>
    </source>
</reference>
<proteinExistence type="inferred from homology"/>
<protein>
    <recommendedName>
        <fullName>D-methionine-binding lipoprotein MetQ</fullName>
    </recommendedName>
</protein>
<sequence>MAFKFKTFAAVGALIGSLALAGCGQDEKDPNHIKVGVIVGAEQQVAEVAQKVAKEKYGLDVELVTFNDYVLPNEALSKGDIDANAFQHKPYLDQQIKDRGYKLVSVGKTFVYPIAGYSKKIKSLDELKDGSQVAVPNDPTNLGRSLLLLQKVGLIKLKDGVGLLPTSLDIVENPKNLKIVELEAPQLPRSLDDAQIALAVINTTYASQIGLTPAKDGIFVEDKDSPYVNLIVTREDNKDAENVKKFVQAYQSDEVYEAANKVFNGGAVKGW</sequence>
<evidence type="ECO:0000250" key="1"/>
<evidence type="ECO:0000255" key="2">
    <source>
        <dbReference type="PROSITE-ProRule" id="PRU00303"/>
    </source>
</evidence>
<evidence type="ECO:0000305" key="3"/>
<feature type="signal peptide" evidence="2">
    <location>
        <begin position="1"/>
        <end position="22"/>
    </location>
</feature>
<feature type="chain" id="PRO_0000019742" description="D-methionine-binding lipoprotein MetQ">
    <location>
        <begin position="23"/>
        <end position="271"/>
    </location>
</feature>
<feature type="lipid moiety-binding region" description="N-palmitoyl cysteine" evidence="2">
    <location>
        <position position="23"/>
    </location>
</feature>
<feature type="lipid moiety-binding region" description="S-diacylglycerol cysteine" evidence="2">
    <location>
        <position position="23"/>
    </location>
</feature>
<gene>
    <name type="primary">metQ</name>
    <name type="ordered locus">STM0245</name>
</gene>
<accession>Q8ZRN1</accession>
<organism>
    <name type="scientific">Salmonella typhimurium (strain LT2 / SGSC1412 / ATCC 700720)</name>
    <dbReference type="NCBI Taxonomy" id="99287"/>
    <lineage>
        <taxon>Bacteria</taxon>
        <taxon>Pseudomonadati</taxon>
        <taxon>Pseudomonadota</taxon>
        <taxon>Gammaproteobacteria</taxon>
        <taxon>Enterobacterales</taxon>
        <taxon>Enterobacteriaceae</taxon>
        <taxon>Salmonella</taxon>
    </lineage>
</organism>
<comment type="function">
    <text evidence="1">This protein is a component of a D-methionine permease, a binding protein-dependent, ATP-driven transport system.</text>
</comment>
<comment type="subcellular location">
    <subcellularLocation>
        <location evidence="3">Cell membrane</location>
        <topology evidence="3">Lipid-anchor</topology>
    </subcellularLocation>
</comment>
<comment type="miscellaneous">
    <text evidence="1">The MetNIQ system is also to be able to transport the toxic methionine analog alpha-methyl-methionine.</text>
</comment>
<comment type="similarity">
    <text evidence="3">Belongs to the NlpA lipoprotein family.</text>
</comment>